<protein>
    <recommendedName>
        <fullName evidence="1">Pentafunctional AROM polypeptide</fullName>
    </recommendedName>
    <domain>
        <recommendedName>
            <fullName evidence="1">3-dehydroquinate synthase</fullName>
            <shortName evidence="1">DHQS</shortName>
            <ecNumber evidence="1">4.2.3.4</ecNumber>
        </recommendedName>
    </domain>
    <domain>
        <recommendedName>
            <fullName evidence="1">3-phosphoshikimate 1-carboxyvinyltransferase</fullName>
            <ecNumber evidence="1">2.5.1.19</ecNumber>
        </recommendedName>
        <alternativeName>
            <fullName evidence="1">5-enolpyruvylshikimate-3-phosphate synthase</fullName>
            <shortName evidence="1">EPSP synthase</shortName>
            <shortName evidence="1">EPSPS</shortName>
        </alternativeName>
    </domain>
    <domain>
        <recommendedName>
            <fullName evidence="1">Shikimate kinase</fullName>
            <shortName evidence="1">SK</shortName>
            <ecNumber evidence="1">2.7.1.71</ecNumber>
        </recommendedName>
    </domain>
    <domain>
        <recommendedName>
            <fullName evidence="1">3-dehydroquinate dehydratase</fullName>
            <shortName evidence="1">3-dehydroquinase</shortName>
            <ecNumber evidence="1">4.2.1.10</ecNumber>
        </recommendedName>
    </domain>
    <domain>
        <recommendedName>
            <fullName evidence="1">Shikimate dehydrogenase</fullName>
            <ecNumber evidence="1">1.1.1.25</ecNumber>
        </recommendedName>
    </domain>
</protein>
<accession>C5DVG6</accession>
<name>ARO1_ZYGRC</name>
<feature type="chain" id="PRO_0000406752" description="Pentafunctional AROM polypeptide">
    <location>
        <begin position="1"/>
        <end position="1589"/>
    </location>
</feature>
<feature type="region of interest" description="3-dehydroquinate synthase">
    <location>
        <begin position="1"/>
        <end position="392"/>
    </location>
</feature>
<feature type="region of interest" description="EPSP synthase">
    <location>
        <begin position="405"/>
        <end position="872"/>
    </location>
</feature>
<feature type="region of interest" description="Shikimate kinase">
    <location>
        <begin position="891"/>
        <end position="1081"/>
    </location>
</feature>
<feature type="region of interest" description="3-dehydroquinase">
    <location>
        <begin position="1082"/>
        <end position="1294"/>
    </location>
</feature>
<feature type="region of interest" description="Shikimate dehydrogenase">
    <location>
        <begin position="1307"/>
        <end position="1589"/>
    </location>
</feature>
<feature type="active site" description="Proton acceptor; for 3-dehydroquinate synthase activity" evidence="1">
    <location>
        <position position="268"/>
    </location>
</feature>
<feature type="active site" description="Proton acceptor; for 3-dehydroquinate synthase activity" evidence="1">
    <location>
        <position position="283"/>
    </location>
</feature>
<feature type="active site" description="For EPSP synthase activity" evidence="1">
    <location>
        <position position="854"/>
    </location>
</feature>
<feature type="active site" description="Proton acceptor; for 3-dehydroquinate dehydratase activity" evidence="1">
    <location>
        <position position="1199"/>
    </location>
</feature>
<feature type="active site" description="Schiff-base intermediate with substrate; for 3-dehydroquinate dehydratase activity" evidence="1">
    <location>
        <position position="1228"/>
    </location>
</feature>
<feature type="binding site" evidence="1">
    <location>
        <begin position="43"/>
        <end position="45"/>
    </location>
    <ligand>
        <name>NAD(+)</name>
        <dbReference type="ChEBI" id="CHEBI:57540"/>
    </ligand>
</feature>
<feature type="binding site" evidence="1">
    <location>
        <begin position="78"/>
        <end position="81"/>
    </location>
    <ligand>
        <name>NAD(+)</name>
        <dbReference type="ChEBI" id="CHEBI:57540"/>
    </ligand>
</feature>
<feature type="binding site" evidence="1">
    <location>
        <begin position="109"/>
        <end position="111"/>
    </location>
    <ligand>
        <name>NAD(+)</name>
        <dbReference type="ChEBI" id="CHEBI:57540"/>
    </ligand>
</feature>
<feature type="binding site" evidence="1">
    <location>
        <position position="114"/>
    </location>
    <ligand>
        <name>NAD(+)</name>
        <dbReference type="ChEBI" id="CHEBI:57540"/>
    </ligand>
</feature>
<feature type="binding site" evidence="1">
    <location>
        <position position="125"/>
    </location>
    <ligand>
        <name>7-phospho-2-dehydro-3-deoxy-D-arabino-heptonate</name>
        <dbReference type="ChEBI" id="CHEBI:58394"/>
    </ligand>
</feature>
<feature type="binding site" evidence="1">
    <location>
        <begin position="134"/>
        <end position="135"/>
    </location>
    <ligand>
        <name>NAD(+)</name>
        <dbReference type="ChEBI" id="CHEBI:57540"/>
    </ligand>
</feature>
<feature type="binding site" evidence="1">
    <location>
        <position position="141"/>
    </location>
    <ligand>
        <name>7-phospho-2-dehydro-3-deoxy-D-arabino-heptonate</name>
        <dbReference type="ChEBI" id="CHEBI:58394"/>
    </ligand>
</feature>
<feature type="binding site" evidence="1">
    <location>
        <position position="147"/>
    </location>
    <ligand>
        <name>7-phospho-2-dehydro-3-deoxy-D-arabino-heptonate</name>
        <dbReference type="ChEBI" id="CHEBI:58394"/>
    </ligand>
</feature>
<feature type="binding site" evidence="1">
    <location>
        <position position="156"/>
    </location>
    <ligand>
        <name>NAD(+)</name>
        <dbReference type="ChEBI" id="CHEBI:57540"/>
    </ligand>
</feature>
<feature type="binding site" evidence="1">
    <location>
        <position position="157"/>
    </location>
    <ligand>
        <name>7-phospho-2-dehydro-3-deoxy-D-arabino-heptonate</name>
        <dbReference type="ChEBI" id="CHEBI:58394"/>
    </ligand>
</feature>
<feature type="binding site" evidence="1">
    <location>
        <begin position="174"/>
        <end position="177"/>
    </location>
    <ligand>
        <name>NAD(+)</name>
        <dbReference type="ChEBI" id="CHEBI:57540"/>
    </ligand>
</feature>
<feature type="binding site" evidence="1">
    <location>
        <position position="185"/>
    </location>
    <ligand>
        <name>NAD(+)</name>
        <dbReference type="ChEBI" id="CHEBI:57540"/>
    </ligand>
</feature>
<feature type="binding site" evidence="1">
    <location>
        <begin position="189"/>
        <end position="192"/>
    </location>
    <ligand>
        <name>7-phospho-2-dehydro-3-deoxy-D-arabino-heptonate</name>
        <dbReference type="ChEBI" id="CHEBI:58394"/>
    </ligand>
</feature>
<feature type="binding site" evidence="1">
    <location>
        <position position="189"/>
    </location>
    <ligand>
        <name>Zn(2+)</name>
        <dbReference type="ChEBI" id="CHEBI:29105"/>
        <note>catalytic</note>
    </ligand>
</feature>
<feature type="binding site" evidence="1">
    <location>
        <position position="258"/>
    </location>
    <ligand>
        <name>7-phospho-2-dehydro-3-deoxy-D-arabino-heptonate</name>
        <dbReference type="ChEBI" id="CHEBI:58394"/>
    </ligand>
</feature>
<feature type="binding site" evidence="1">
    <location>
        <begin position="272"/>
        <end position="276"/>
    </location>
    <ligand>
        <name>7-phospho-2-dehydro-3-deoxy-D-arabino-heptonate</name>
        <dbReference type="ChEBI" id="CHEBI:58394"/>
    </ligand>
</feature>
<feature type="binding site" evidence="1">
    <location>
        <position position="279"/>
    </location>
    <ligand>
        <name>7-phospho-2-dehydro-3-deoxy-D-arabino-heptonate</name>
        <dbReference type="ChEBI" id="CHEBI:58394"/>
    </ligand>
</feature>
<feature type="binding site" evidence="1">
    <location>
        <position position="279"/>
    </location>
    <ligand>
        <name>Zn(2+)</name>
        <dbReference type="ChEBI" id="CHEBI:29105"/>
        <note>catalytic</note>
    </ligand>
</feature>
<feature type="binding site" evidence="1">
    <location>
        <position position="295"/>
    </location>
    <ligand>
        <name>7-phospho-2-dehydro-3-deoxy-D-arabino-heptonate</name>
        <dbReference type="ChEBI" id="CHEBI:58394"/>
    </ligand>
</feature>
<feature type="binding site" evidence="1">
    <location>
        <position position="295"/>
    </location>
    <ligand>
        <name>Zn(2+)</name>
        <dbReference type="ChEBI" id="CHEBI:29105"/>
        <note>catalytic</note>
    </ligand>
</feature>
<feature type="binding site" evidence="1">
    <location>
        <position position="364"/>
    </location>
    <ligand>
        <name>7-phospho-2-dehydro-3-deoxy-D-arabino-heptonate</name>
        <dbReference type="ChEBI" id="CHEBI:58394"/>
    </ligand>
</feature>
<feature type="binding site" evidence="1">
    <location>
        <begin position="896"/>
        <end position="903"/>
    </location>
    <ligand>
        <name>ATP</name>
        <dbReference type="ChEBI" id="CHEBI:30616"/>
    </ligand>
</feature>
<organism>
    <name type="scientific">Zygosaccharomyces rouxii (strain ATCC 2623 / CBS 732 / NBRC 1130 / NCYC 568 / NRRL Y-229)</name>
    <dbReference type="NCBI Taxonomy" id="559307"/>
    <lineage>
        <taxon>Eukaryota</taxon>
        <taxon>Fungi</taxon>
        <taxon>Dikarya</taxon>
        <taxon>Ascomycota</taxon>
        <taxon>Saccharomycotina</taxon>
        <taxon>Saccharomycetes</taxon>
        <taxon>Saccharomycetales</taxon>
        <taxon>Saccharomycetaceae</taxon>
        <taxon>Zygosaccharomyces</taxon>
    </lineage>
</organism>
<reference key="1">
    <citation type="journal article" date="2009" name="Genome Res.">
        <title>Comparative genomics of protoploid Saccharomycetaceae.</title>
        <authorList>
            <consortium name="The Genolevures Consortium"/>
            <person name="Souciet J.-L."/>
            <person name="Dujon B."/>
            <person name="Gaillardin C."/>
            <person name="Johnston M."/>
            <person name="Baret P.V."/>
            <person name="Cliften P."/>
            <person name="Sherman D.J."/>
            <person name="Weissenbach J."/>
            <person name="Westhof E."/>
            <person name="Wincker P."/>
            <person name="Jubin C."/>
            <person name="Poulain J."/>
            <person name="Barbe V."/>
            <person name="Segurens B."/>
            <person name="Artiguenave F."/>
            <person name="Anthouard V."/>
            <person name="Vacherie B."/>
            <person name="Val M.-E."/>
            <person name="Fulton R.S."/>
            <person name="Minx P."/>
            <person name="Wilson R."/>
            <person name="Durrens P."/>
            <person name="Jean G."/>
            <person name="Marck C."/>
            <person name="Martin T."/>
            <person name="Nikolski M."/>
            <person name="Rolland T."/>
            <person name="Seret M.-L."/>
            <person name="Casaregola S."/>
            <person name="Despons L."/>
            <person name="Fairhead C."/>
            <person name="Fischer G."/>
            <person name="Lafontaine I."/>
            <person name="Leh V."/>
            <person name="Lemaire M."/>
            <person name="de Montigny J."/>
            <person name="Neuveglise C."/>
            <person name="Thierry A."/>
            <person name="Blanc-Lenfle I."/>
            <person name="Bleykasten C."/>
            <person name="Diffels J."/>
            <person name="Fritsch E."/>
            <person name="Frangeul L."/>
            <person name="Goeffon A."/>
            <person name="Jauniaux N."/>
            <person name="Kachouri-Lafond R."/>
            <person name="Payen C."/>
            <person name="Potier S."/>
            <person name="Pribylova L."/>
            <person name="Ozanne C."/>
            <person name="Richard G.-F."/>
            <person name="Sacerdot C."/>
            <person name="Straub M.-L."/>
            <person name="Talla E."/>
        </authorList>
    </citation>
    <scope>NUCLEOTIDE SEQUENCE [LARGE SCALE GENOMIC DNA]</scope>
    <source>
        <strain>ATCC 2623 / CBS 732 / BCRC 21506 / NBRC 1130 / NCYC 568 / NRRL Y-229</strain>
    </source>
</reference>
<proteinExistence type="inferred from homology"/>
<gene>
    <name evidence="1" type="primary">ARO1</name>
    <name type="ordered locus">ZYRO0D06578g</name>
</gene>
<evidence type="ECO:0000255" key="1">
    <source>
        <dbReference type="HAMAP-Rule" id="MF_03143"/>
    </source>
</evidence>
<keyword id="KW-0028">Amino-acid biosynthesis</keyword>
<keyword id="KW-0057">Aromatic amino acid biosynthesis</keyword>
<keyword id="KW-0067">ATP-binding</keyword>
<keyword id="KW-0963">Cytoplasm</keyword>
<keyword id="KW-0418">Kinase</keyword>
<keyword id="KW-0456">Lyase</keyword>
<keyword id="KW-0479">Metal-binding</keyword>
<keyword id="KW-0511">Multifunctional enzyme</keyword>
<keyword id="KW-0521">NADP</keyword>
<keyword id="KW-0547">Nucleotide-binding</keyword>
<keyword id="KW-0560">Oxidoreductase</keyword>
<keyword id="KW-1185">Reference proteome</keyword>
<keyword id="KW-0808">Transferase</keyword>
<keyword id="KW-0862">Zinc</keyword>
<comment type="function">
    <text evidence="1">The AROM polypeptide catalyzes 5 consecutive enzymatic reactions in prechorismate polyaromatic amino acid biosynthesis.</text>
</comment>
<comment type="catalytic activity">
    <reaction evidence="1">
        <text>7-phospho-2-dehydro-3-deoxy-D-arabino-heptonate = 3-dehydroquinate + phosphate</text>
        <dbReference type="Rhea" id="RHEA:21968"/>
        <dbReference type="ChEBI" id="CHEBI:32364"/>
        <dbReference type="ChEBI" id="CHEBI:43474"/>
        <dbReference type="ChEBI" id="CHEBI:58394"/>
        <dbReference type="EC" id="4.2.3.4"/>
    </reaction>
</comment>
<comment type="catalytic activity">
    <reaction evidence="1">
        <text>3-dehydroquinate = 3-dehydroshikimate + H2O</text>
        <dbReference type="Rhea" id="RHEA:21096"/>
        <dbReference type="ChEBI" id="CHEBI:15377"/>
        <dbReference type="ChEBI" id="CHEBI:16630"/>
        <dbReference type="ChEBI" id="CHEBI:32364"/>
        <dbReference type="EC" id="4.2.1.10"/>
    </reaction>
</comment>
<comment type="catalytic activity">
    <reaction evidence="1">
        <text>shikimate + NADP(+) = 3-dehydroshikimate + NADPH + H(+)</text>
        <dbReference type="Rhea" id="RHEA:17737"/>
        <dbReference type="ChEBI" id="CHEBI:15378"/>
        <dbReference type="ChEBI" id="CHEBI:16630"/>
        <dbReference type="ChEBI" id="CHEBI:36208"/>
        <dbReference type="ChEBI" id="CHEBI:57783"/>
        <dbReference type="ChEBI" id="CHEBI:58349"/>
        <dbReference type="EC" id="1.1.1.25"/>
    </reaction>
</comment>
<comment type="catalytic activity">
    <reaction evidence="1">
        <text>shikimate + ATP = 3-phosphoshikimate + ADP + H(+)</text>
        <dbReference type="Rhea" id="RHEA:13121"/>
        <dbReference type="ChEBI" id="CHEBI:15378"/>
        <dbReference type="ChEBI" id="CHEBI:30616"/>
        <dbReference type="ChEBI" id="CHEBI:36208"/>
        <dbReference type="ChEBI" id="CHEBI:145989"/>
        <dbReference type="ChEBI" id="CHEBI:456216"/>
        <dbReference type="EC" id="2.7.1.71"/>
    </reaction>
</comment>
<comment type="catalytic activity">
    <reaction evidence="1">
        <text>3-phosphoshikimate + phosphoenolpyruvate = 5-O-(1-carboxyvinyl)-3-phosphoshikimate + phosphate</text>
        <dbReference type="Rhea" id="RHEA:21256"/>
        <dbReference type="ChEBI" id="CHEBI:43474"/>
        <dbReference type="ChEBI" id="CHEBI:57701"/>
        <dbReference type="ChEBI" id="CHEBI:58702"/>
        <dbReference type="ChEBI" id="CHEBI:145989"/>
        <dbReference type="EC" id="2.5.1.19"/>
    </reaction>
</comment>
<comment type="cofactor">
    <cofactor>
        <name>Zn(2+)</name>
        <dbReference type="ChEBI" id="CHEBI:29105"/>
    </cofactor>
    <text>Binds 2 Zn(2+) ions per subunit.</text>
</comment>
<comment type="pathway">
    <text evidence="1">Metabolic intermediate biosynthesis; chorismate biosynthesis; chorismate from D-erythrose 4-phosphate and phosphoenolpyruvate: step 2/7.</text>
</comment>
<comment type="pathway">
    <text evidence="1">Metabolic intermediate biosynthesis; chorismate biosynthesis; chorismate from D-erythrose 4-phosphate and phosphoenolpyruvate: step 3/7.</text>
</comment>
<comment type="pathway">
    <text evidence="1">Metabolic intermediate biosynthesis; chorismate biosynthesis; chorismate from D-erythrose 4-phosphate and phosphoenolpyruvate: step 4/7.</text>
</comment>
<comment type="pathway">
    <text evidence="1">Metabolic intermediate biosynthesis; chorismate biosynthesis; chorismate from D-erythrose 4-phosphate and phosphoenolpyruvate: step 5/7.</text>
</comment>
<comment type="pathway">
    <text evidence="1">Metabolic intermediate biosynthesis; chorismate biosynthesis; chorismate from D-erythrose 4-phosphate and phosphoenolpyruvate: step 6/7.</text>
</comment>
<comment type="subunit">
    <text evidence="1">Homodimer.</text>
</comment>
<comment type="subcellular location">
    <subcellularLocation>
        <location evidence="1">Cytoplasm</location>
    </subcellularLocation>
</comment>
<comment type="similarity">
    <text evidence="1">In the N-terminal section; belongs to the sugar phosphate cyclases superfamily. Dehydroquinate synthase family.</text>
</comment>
<comment type="similarity">
    <text evidence="1">In the 2nd section; belongs to the EPSP synthase family.</text>
</comment>
<comment type="similarity">
    <text evidence="1">In the 3rd section; belongs to the shikimate kinase family.</text>
</comment>
<comment type="similarity">
    <text evidence="1">In the 4th section; belongs to the type-I 3-dehydroquinase family.</text>
</comment>
<comment type="similarity">
    <text evidence="1">In the C-terminal section; belongs to the shikimate dehydrogenase family.</text>
</comment>
<dbReference type="EC" id="4.2.3.4" evidence="1"/>
<dbReference type="EC" id="2.5.1.19" evidence="1"/>
<dbReference type="EC" id="2.7.1.71" evidence="1"/>
<dbReference type="EC" id="4.2.1.10" evidence="1"/>
<dbReference type="EC" id="1.1.1.25" evidence="1"/>
<dbReference type="EMBL" id="CU928176">
    <property type="protein sequence ID" value="CAR27785.1"/>
    <property type="molecule type" value="Genomic_DNA"/>
</dbReference>
<dbReference type="RefSeq" id="XP_002496718.1">
    <property type="nucleotide sequence ID" value="XM_002496673.1"/>
</dbReference>
<dbReference type="SMR" id="C5DVG6"/>
<dbReference type="FunCoup" id="C5DVG6">
    <property type="interactions" value="536"/>
</dbReference>
<dbReference type="STRING" id="559307.C5DVG6"/>
<dbReference type="GeneID" id="8203972"/>
<dbReference type="KEGG" id="zro:ZYRO0D06578g"/>
<dbReference type="HOGENOM" id="CLU_001201_1_2_1"/>
<dbReference type="InParanoid" id="C5DVG6"/>
<dbReference type="UniPathway" id="UPA00053">
    <property type="reaction ID" value="UER00085"/>
</dbReference>
<dbReference type="UniPathway" id="UPA00053">
    <property type="reaction ID" value="UER00086"/>
</dbReference>
<dbReference type="UniPathway" id="UPA00053">
    <property type="reaction ID" value="UER00087"/>
</dbReference>
<dbReference type="UniPathway" id="UPA00053">
    <property type="reaction ID" value="UER00088"/>
</dbReference>
<dbReference type="UniPathway" id="UPA00053">
    <property type="reaction ID" value="UER00089"/>
</dbReference>
<dbReference type="Proteomes" id="UP000008536">
    <property type="component" value="Chromosome D"/>
</dbReference>
<dbReference type="GO" id="GO:0005737">
    <property type="term" value="C:cytoplasm"/>
    <property type="evidence" value="ECO:0007669"/>
    <property type="project" value="UniProtKB-SubCell"/>
</dbReference>
<dbReference type="GO" id="GO:0003855">
    <property type="term" value="F:3-dehydroquinate dehydratase activity"/>
    <property type="evidence" value="ECO:0007669"/>
    <property type="project" value="UniProtKB-UniRule"/>
</dbReference>
<dbReference type="GO" id="GO:0003856">
    <property type="term" value="F:3-dehydroquinate synthase activity"/>
    <property type="evidence" value="ECO:0007669"/>
    <property type="project" value="UniProtKB-UniRule"/>
</dbReference>
<dbReference type="GO" id="GO:0003866">
    <property type="term" value="F:3-phosphoshikimate 1-carboxyvinyltransferase activity"/>
    <property type="evidence" value="ECO:0007669"/>
    <property type="project" value="UniProtKB-UniRule"/>
</dbReference>
<dbReference type="GO" id="GO:0005524">
    <property type="term" value="F:ATP binding"/>
    <property type="evidence" value="ECO:0007669"/>
    <property type="project" value="UniProtKB-UniRule"/>
</dbReference>
<dbReference type="GO" id="GO:0046872">
    <property type="term" value="F:metal ion binding"/>
    <property type="evidence" value="ECO:0007669"/>
    <property type="project" value="UniProtKB-UniRule"/>
</dbReference>
<dbReference type="GO" id="GO:0004764">
    <property type="term" value="F:shikimate 3-dehydrogenase (NADP+) activity"/>
    <property type="evidence" value="ECO:0007669"/>
    <property type="project" value="UniProtKB-UniRule"/>
</dbReference>
<dbReference type="GO" id="GO:0004765">
    <property type="term" value="F:shikimate kinase activity"/>
    <property type="evidence" value="ECO:0007669"/>
    <property type="project" value="UniProtKB-UniRule"/>
</dbReference>
<dbReference type="GO" id="GO:0008652">
    <property type="term" value="P:amino acid biosynthetic process"/>
    <property type="evidence" value="ECO:0007669"/>
    <property type="project" value="UniProtKB-KW"/>
</dbReference>
<dbReference type="GO" id="GO:0009073">
    <property type="term" value="P:aromatic amino acid family biosynthetic process"/>
    <property type="evidence" value="ECO:0007669"/>
    <property type="project" value="UniProtKB-UniRule"/>
</dbReference>
<dbReference type="GO" id="GO:0009423">
    <property type="term" value="P:chorismate biosynthetic process"/>
    <property type="evidence" value="ECO:0007669"/>
    <property type="project" value="UniProtKB-UniRule"/>
</dbReference>
<dbReference type="CDD" id="cd00502">
    <property type="entry name" value="DHQase_I"/>
    <property type="match status" value="1"/>
</dbReference>
<dbReference type="CDD" id="cd08195">
    <property type="entry name" value="DHQS"/>
    <property type="match status" value="1"/>
</dbReference>
<dbReference type="CDD" id="cd01556">
    <property type="entry name" value="EPSP_synthase"/>
    <property type="match status" value="1"/>
</dbReference>
<dbReference type="CDD" id="cd01065">
    <property type="entry name" value="NAD_bind_Shikimate_DH"/>
    <property type="match status" value="1"/>
</dbReference>
<dbReference type="CDD" id="cd00464">
    <property type="entry name" value="SK"/>
    <property type="match status" value="1"/>
</dbReference>
<dbReference type="FunFam" id="1.20.1090.10:FF:000007">
    <property type="entry name" value="Pentafunctional AROM polypeptide"/>
    <property type="match status" value="1"/>
</dbReference>
<dbReference type="FunFam" id="3.20.20.70:FF:000135">
    <property type="entry name" value="Pentafunctional AROM polypeptide"/>
    <property type="match status" value="1"/>
</dbReference>
<dbReference type="FunFam" id="3.40.50.1970:FF:000007">
    <property type="entry name" value="Pentafunctional AROM polypeptide"/>
    <property type="match status" value="1"/>
</dbReference>
<dbReference type="FunFam" id="3.40.50.300:FF:001256">
    <property type="entry name" value="Pentafunctional AROM polypeptide"/>
    <property type="match status" value="1"/>
</dbReference>
<dbReference type="FunFam" id="3.65.10.10:FF:000007">
    <property type="entry name" value="Pentafunctional AROM polypeptide"/>
    <property type="match status" value="1"/>
</dbReference>
<dbReference type="Gene3D" id="3.40.50.1970">
    <property type="match status" value="1"/>
</dbReference>
<dbReference type="Gene3D" id="3.20.20.70">
    <property type="entry name" value="Aldolase class I"/>
    <property type="match status" value="1"/>
</dbReference>
<dbReference type="Gene3D" id="1.20.1090.10">
    <property type="entry name" value="Dehydroquinate synthase-like - alpha domain"/>
    <property type="match status" value="1"/>
</dbReference>
<dbReference type="Gene3D" id="3.65.10.10">
    <property type="entry name" value="Enolpyruvate transferase domain"/>
    <property type="match status" value="2"/>
</dbReference>
<dbReference type="Gene3D" id="3.40.50.10860">
    <property type="entry name" value="Leucine Dehydrogenase, chain A, domain 1"/>
    <property type="match status" value="1"/>
</dbReference>
<dbReference type="Gene3D" id="3.40.50.720">
    <property type="entry name" value="NAD(P)-binding Rossmann-like Domain"/>
    <property type="match status" value="1"/>
</dbReference>
<dbReference type="Gene3D" id="3.40.50.300">
    <property type="entry name" value="P-loop containing nucleotide triphosphate hydrolases"/>
    <property type="match status" value="1"/>
</dbReference>
<dbReference type="HAMAP" id="MF_00210">
    <property type="entry name" value="EPSP_synth"/>
    <property type="match status" value="1"/>
</dbReference>
<dbReference type="HAMAP" id="MF_03143">
    <property type="entry name" value="Pentafunct_AroM"/>
    <property type="match status" value="1"/>
</dbReference>
<dbReference type="HAMAP" id="MF_00109">
    <property type="entry name" value="Shikimate_kinase"/>
    <property type="match status" value="1"/>
</dbReference>
<dbReference type="InterPro" id="IPR018508">
    <property type="entry name" value="3-dehydroquinate_DH_AS"/>
</dbReference>
<dbReference type="InterPro" id="IPR013785">
    <property type="entry name" value="Aldolase_TIM"/>
</dbReference>
<dbReference type="InterPro" id="IPR046346">
    <property type="entry name" value="Aminoacid_DH-like_N_sf"/>
</dbReference>
<dbReference type="InterPro" id="IPR016037">
    <property type="entry name" value="DHQ_synth_AroB"/>
</dbReference>
<dbReference type="InterPro" id="IPR030960">
    <property type="entry name" value="DHQS/DOIS_N"/>
</dbReference>
<dbReference type="InterPro" id="IPR056179">
    <property type="entry name" value="DHQS_C"/>
</dbReference>
<dbReference type="InterPro" id="IPR001381">
    <property type="entry name" value="DHquinase_I"/>
</dbReference>
<dbReference type="InterPro" id="IPR001986">
    <property type="entry name" value="Enolpyruvate_Tfrase_dom"/>
</dbReference>
<dbReference type="InterPro" id="IPR036968">
    <property type="entry name" value="Enolpyruvate_Tfrase_sf"/>
</dbReference>
<dbReference type="InterPro" id="IPR006264">
    <property type="entry name" value="EPSP_synthase"/>
</dbReference>
<dbReference type="InterPro" id="IPR023193">
    <property type="entry name" value="EPSP_synthase_CS"/>
</dbReference>
<dbReference type="InterPro" id="IPR036291">
    <property type="entry name" value="NAD(P)-bd_dom_sf"/>
</dbReference>
<dbReference type="InterPro" id="IPR027417">
    <property type="entry name" value="P-loop_NTPase"/>
</dbReference>
<dbReference type="InterPro" id="IPR008289">
    <property type="entry name" value="Pentafunct_AroM"/>
</dbReference>
<dbReference type="InterPro" id="IPR013792">
    <property type="entry name" value="RNA3'P_cycl/enolpyr_Trfase_a/b"/>
</dbReference>
<dbReference type="InterPro" id="IPR041121">
    <property type="entry name" value="SDH_C"/>
</dbReference>
<dbReference type="InterPro" id="IPR031322">
    <property type="entry name" value="Shikimate/glucono_kinase"/>
</dbReference>
<dbReference type="InterPro" id="IPR013708">
    <property type="entry name" value="Shikimate_DH-bd_N"/>
</dbReference>
<dbReference type="InterPro" id="IPR010110">
    <property type="entry name" value="Shikimate_DH_AroM-type"/>
</dbReference>
<dbReference type="InterPro" id="IPR000623">
    <property type="entry name" value="Shikimate_kinase/TSH1"/>
</dbReference>
<dbReference type="InterPro" id="IPR023000">
    <property type="entry name" value="Shikimate_kinase_CS"/>
</dbReference>
<dbReference type="InterPro" id="IPR006151">
    <property type="entry name" value="Shikm_DH/Glu-tRNA_Rdtase"/>
</dbReference>
<dbReference type="NCBIfam" id="TIGR01356">
    <property type="entry name" value="aroA"/>
    <property type="match status" value="1"/>
</dbReference>
<dbReference type="NCBIfam" id="TIGR01357">
    <property type="entry name" value="aroB"/>
    <property type="match status" value="1"/>
</dbReference>
<dbReference type="NCBIfam" id="TIGR01093">
    <property type="entry name" value="aroD"/>
    <property type="match status" value="1"/>
</dbReference>
<dbReference type="NCBIfam" id="TIGR01809">
    <property type="entry name" value="Shik-DH-AROM"/>
    <property type="match status" value="1"/>
</dbReference>
<dbReference type="PANTHER" id="PTHR21090">
    <property type="entry name" value="AROM/DEHYDROQUINATE SYNTHASE"/>
    <property type="match status" value="1"/>
</dbReference>
<dbReference type="PANTHER" id="PTHR21090:SF5">
    <property type="entry name" value="PENTAFUNCTIONAL AROM POLYPEPTIDE"/>
    <property type="match status" value="1"/>
</dbReference>
<dbReference type="Pfam" id="PF01761">
    <property type="entry name" value="DHQ_synthase"/>
    <property type="match status" value="1"/>
</dbReference>
<dbReference type="Pfam" id="PF24621">
    <property type="entry name" value="DHQS_C"/>
    <property type="match status" value="1"/>
</dbReference>
<dbReference type="Pfam" id="PF01487">
    <property type="entry name" value="DHquinase_I"/>
    <property type="match status" value="1"/>
</dbReference>
<dbReference type="Pfam" id="PF00275">
    <property type="entry name" value="EPSP_synthase"/>
    <property type="match status" value="1"/>
</dbReference>
<dbReference type="Pfam" id="PF18317">
    <property type="entry name" value="SDH_C"/>
    <property type="match status" value="1"/>
</dbReference>
<dbReference type="Pfam" id="PF01488">
    <property type="entry name" value="Shikimate_DH"/>
    <property type="match status" value="1"/>
</dbReference>
<dbReference type="Pfam" id="PF08501">
    <property type="entry name" value="Shikimate_dh_N"/>
    <property type="match status" value="1"/>
</dbReference>
<dbReference type="Pfam" id="PF01202">
    <property type="entry name" value="SKI"/>
    <property type="match status" value="1"/>
</dbReference>
<dbReference type="PIRSF" id="PIRSF000514">
    <property type="entry name" value="Pentafunct_AroM"/>
    <property type="match status" value="1"/>
</dbReference>
<dbReference type="PRINTS" id="PR01100">
    <property type="entry name" value="SHIKIMTKNASE"/>
</dbReference>
<dbReference type="SUPFAM" id="SSF51569">
    <property type="entry name" value="Aldolase"/>
    <property type="match status" value="1"/>
</dbReference>
<dbReference type="SUPFAM" id="SSF53223">
    <property type="entry name" value="Aminoacid dehydrogenase-like, N-terminal domain"/>
    <property type="match status" value="1"/>
</dbReference>
<dbReference type="SUPFAM" id="SSF56796">
    <property type="entry name" value="Dehydroquinate synthase-like"/>
    <property type="match status" value="1"/>
</dbReference>
<dbReference type="SUPFAM" id="SSF55205">
    <property type="entry name" value="EPT/RTPC-like"/>
    <property type="match status" value="1"/>
</dbReference>
<dbReference type="SUPFAM" id="SSF51735">
    <property type="entry name" value="NAD(P)-binding Rossmann-fold domains"/>
    <property type="match status" value="1"/>
</dbReference>
<dbReference type="SUPFAM" id="SSF52540">
    <property type="entry name" value="P-loop containing nucleoside triphosphate hydrolases"/>
    <property type="match status" value="1"/>
</dbReference>
<dbReference type="PROSITE" id="PS01028">
    <property type="entry name" value="DEHYDROQUINASE_I"/>
    <property type="match status" value="1"/>
</dbReference>
<dbReference type="PROSITE" id="PS00104">
    <property type="entry name" value="EPSP_SYNTHASE_1"/>
    <property type="match status" value="1"/>
</dbReference>
<dbReference type="PROSITE" id="PS00885">
    <property type="entry name" value="EPSP_SYNTHASE_2"/>
    <property type="match status" value="1"/>
</dbReference>
<dbReference type="PROSITE" id="PS01128">
    <property type="entry name" value="SHIKIMATE_KINASE"/>
    <property type="match status" value="1"/>
</dbReference>
<sequence length="1589" mass="175153">MVKFEKVPILGKESIHVGYDIHTDMVQTIINDCRSSTYVVVNDTNLSKVPYCQDFVQELRSSLPEGSRLLQYAVKPGEANKTRSTKADIEDYLLSKGCTRDTVIIAIGGGIIGDMVGFVAATFMRGVRVVQVPTSLLAMVDSSIGGKTAVDTPLGKNFIGAFWQPQFVLVDVKWLETLPRREFINGMAEVIKTACIWNGLEFERLESNAELFLRVVNGSKVIKVNGLSTGEVNDIHYTNIEAMLEHTFKLVLESIKVKAEVVSSDERESSLRNLLNFGHSVGHAYEAILTPQALHGECVSIGMIKEAELSRYLGILSPTQVSRLTKILAAYGLPISPEEKWFKDLTLQKKTPLDVLLQKMSIDKKNDGSKKKVVILESIGKCYGKSAHYVNDEDLKFVLTDETLVYPFSNIPQEQAKTIVPPGSKSISNRALILAALGKGTCKIKNLLHSDDTKHMLTAVQELKGASITWEDNGETVVLEGHGGETLTASADPLYLGNAGTASRFLTTLAALVNSSSKQDYVVLTGNARMQQRPIGPLVDSLRTNGTKIDYLKSEGSLPLKIYTSTPFKGGRIELAATVSSQYVSSVLMCAPYAENPVTLALVGGKPISQLYVDMTIKMMEKFGIKVEVSTTEPYTYHIPKGQYTNPPEYIIESDASSATYPLAFAAMTGTTVTVPNIGYESLQGDARFAIEVLRPMGCKVEQTANSTTVTGPPTGSLRPLKHVDMEPMTDAFLTASVVAAVAHDNDTDSANVTTIEGIANQRVKECNRIEAMSTELAKFGVATKELPDGIQIHGINSLDLLQLPSNSTGPIGIESYDDHRVAMSLSLLAGMVNYSKSHPAADIKPVRILERRCTGKTWPGWWDVLHTELGAHLDGAEPLGYLSGKKTKRSVVLIGMRAAGKSTLGRWCSQILGYELCDLDVLFEKQYAKGTVKDFVAEHGWDKFREAEANLFKETVEQYGDGGYVFSAGGGLVENEVSREHLKKYASDGGVVLHLHRDIEETIVFLQSDPTRPAYMEEIRDVWERREKWYNECSNFAFLAPHCSNEKEFQHLRKSFANYITAITGNREVQVPNKRSAFVCLTFGDLTEKASVLPSIVRGCDAVELRVDHLAKYDSQFVSKQLSTLRTATNDLPIVFTLRTKKQGGKFPDEDYTGMARLFDVALKACVEYIDLELTLPIDVQYKVSNTKGYTKIIGSHHDFGAKYPWKDPEWENRYNQALSLDVDVIKFVGTATKFEDNLALERFREEHKSKPLIAINMGEIGKISRVLNPILTPITSEHLPNSSAPGQLTLAQINKIFASMGGITSKKFFVVGNPVSHSRSPVLHNTGYKLNGLPHHFDRFETDSAQVVKETLLDGEPSLGGLAVTIPLKLDIMKYMNQLTDAARVIGAMNTVIPLGNHHFKGDNTDWIGIKHSLTSNGVPEKVSNVAGLVIGAGGTSRAAIYSLHNLGCHRIFVINRTVSKSIELRDSFPQEYNVVAAETTQQIDHLNEHIGIAVSCVPADKDLDTELLAKLERFLHKGKHNSFVPTLLEAAYKPDVTPVMKLAHDKYQWQVVPGRELLVHQGVAQFEIWTGAKAPFQEIFNAVTRD</sequence>